<evidence type="ECO:0000269" key="1">
    <source>
    </source>
</evidence>
<evidence type="ECO:0000269" key="2">
    <source>
    </source>
</evidence>
<evidence type="ECO:0000269" key="3">
    <source>
    </source>
</evidence>
<evidence type="ECO:0000269" key="4">
    <source>
    </source>
</evidence>
<evidence type="ECO:0000269" key="5">
    <source>
    </source>
</evidence>
<evidence type="ECO:0000303" key="6">
    <source>
    </source>
</evidence>
<evidence type="ECO:0000305" key="7"/>
<evidence type="ECO:0007744" key="8">
    <source>
        <dbReference type="PDB" id="6S3K"/>
    </source>
</evidence>
<evidence type="ECO:0007829" key="9">
    <source>
        <dbReference type="PDB" id="8B70"/>
    </source>
</evidence>
<reference key="1">
    <citation type="submission" date="1997-03" db="EMBL/GenBank/DDBJ databases">
        <title>A 148 kbp sequence of the region between 35 and 47 degree of the Bacillus subtilis genome.</title>
        <authorList>
            <person name="Kasahara Y."/>
            <person name="Nakai S."/>
            <person name="Lee S."/>
            <person name="Sadaie Y."/>
            <person name="Ogasawara N."/>
        </authorList>
    </citation>
    <scope>NUCLEOTIDE SEQUENCE [GENOMIC DNA]</scope>
    <source>
        <strain>168</strain>
    </source>
</reference>
<reference key="2">
    <citation type="journal article" date="1997" name="Nature">
        <title>The complete genome sequence of the Gram-positive bacterium Bacillus subtilis.</title>
        <authorList>
            <person name="Kunst F."/>
            <person name="Ogasawara N."/>
            <person name="Moszer I."/>
            <person name="Albertini A.M."/>
            <person name="Alloni G."/>
            <person name="Azevedo V."/>
            <person name="Bertero M.G."/>
            <person name="Bessieres P."/>
            <person name="Bolotin A."/>
            <person name="Borchert S."/>
            <person name="Borriss R."/>
            <person name="Boursier L."/>
            <person name="Brans A."/>
            <person name="Braun M."/>
            <person name="Brignell S.C."/>
            <person name="Bron S."/>
            <person name="Brouillet S."/>
            <person name="Bruschi C.V."/>
            <person name="Caldwell B."/>
            <person name="Capuano V."/>
            <person name="Carter N.M."/>
            <person name="Choi S.-K."/>
            <person name="Codani J.-J."/>
            <person name="Connerton I.F."/>
            <person name="Cummings N.J."/>
            <person name="Daniel R.A."/>
            <person name="Denizot F."/>
            <person name="Devine K.M."/>
            <person name="Duesterhoeft A."/>
            <person name="Ehrlich S.D."/>
            <person name="Emmerson P.T."/>
            <person name="Entian K.-D."/>
            <person name="Errington J."/>
            <person name="Fabret C."/>
            <person name="Ferrari E."/>
            <person name="Foulger D."/>
            <person name="Fritz C."/>
            <person name="Fujita M."/>
            <person name="Fujita Y."/>
            <person name="Fuma S."/>
            <person name="Galizzi A."/>
            <person name="Galleron N."/>
            <person name="Ghim S.-Y."/>
            <person name="Glaser P."/>
            <person name="Goffeau A."/>
            <person name="Golightly E.J."/>
            <person name="Grandi G."/>
            <person name="Guiseppi G."/>
            <person name="Guy B.J."/>
            <person name="Haga K."/>
            <person name="Haiech J."/>
            <person name="Harwood C.R."/>
            <person name="Henaut A."/>
            <person name="Hilbert H."/>
            <person name="Holsappel S."/>
            <person name="Hosono S."/>
            <person name="Hullo M.-F."/>
            <person name="Itaya M."/>
            <person name="Jones L.-M."/>
            <person name="Joris B."/>
            <person name="Karamata D."/>
            <person name="Kasahara Y."/>
            <person name="Klaerr-Blanchard M."/>
            <person name="Klein C."/>
            <person name="Kobayashi Y."/>
            <person name="Koetter P."/>
            <person name="Koningstein G."/>
            <person name="Krogh S."/>
            <person name="Kumano M."/>
            <person name="Kurita K."/>
            <person name="Lapidus A."/>
            <person name="Lardinois S."/>
            <person name="Lauber J."/>
            <person name="Lazarevic V."/>
            <person name="Lee S.-M."/>
            <person name="Levine A."/>
            <person name="Liu H."/>
            <person name="Masuda S."/>
            <person name="Mauel C."/>
            <person name="Medigue C."/>
            <person name="Medina N."/>
            <person name="Mellado R.P."/>
            <person name="Mizuno M."/>
            <person name="Moestl D."/>
            <person name="Nakai S."/>
            <person name="Noback M."/>
            <person name="Noone D."/>
            <person name="O'Reilly M."/>
            <person name="Ogawa K."/>
            <person name="Ogiwara A."/>
            <person name="Oudega B."/>
            <person name="Park S.-H."/>
            <person name="Parro V."/>
            <person name="Pohl T.M."/>
            <person name="Portetelle D."/>
            <person name="Porwollik S."/>
            <person name="Prescott A.M."/>
            <person name="Presecan E."/>
            <person name="Pujic P."/>
            <person name="Purnelle B."/>
            <person name="Rapoport G."/>
            <person name="Rey M."/>
            <person name="Reynolds S."/>
            <person name="Rieger M."/>
            <person name="Rivolta C."/>
            <person name="Rocha E."/>
            <person name="Roche B."/>
            <person name="Rose M."/>
            <person name="Sadaie Y."/>
            <person name="Sato T."/>
            <person name="Scanlan E."/>
            <person name="Schleich S."/>
            <person name="Schroeter R."/>
            <person name="Scoffone F."/>
            <person name="Sekiguchi J."/>
            <person name="Sekowska A."/>
            <person name="Seror S.J."/>
            <person name="Serror P."/>
            <person name="Shin B.-S."/>
            <person name="Soldo B."/>
            <person name="Sorokin A."/>
            <person name="Tacconi E."/>
            <person name="Takagi T."/>
            <person name="Takahashi H."/>
            <person name="Takemaru K."/>
            <person name="Takeuchi M."/>
            <person name="Tamakoshi A."/>
            <person name="Tanaka T."/>
            <person name="Terpstra P."/>
            <person name="Tognoni A."/>
            <person name="Tosato V."/>
            <person name="Uchiyama S."/>
            <person name="Vandenbol M."/>
            <person name="Vannier F."/>
            <person name="Vassarotti A."/>
            <person name="Viari A."/>
            <person name="Wambutt R."/>
            <person name="Wedler E."/>
            <person name="Wedler H."/>
            <person name="Weitzenegger T."/>
            <person name="Winters P."/>
            <person name="Wipat A."/>
            <person name="Yamamoto H."/>
            <person name="Yamane K."/>
            <person name="Yasumoto K."/>
            <person name="Yata K."/>
            <person name="Yoshida K."/>
            <person name="Yoshikawa H.-F."/>
            <person name="Zumstein E."/>
            <person name="Yoshikawa H."/>
            <person name="Danchin A."/>
        </authorList>
    </citation>
    <scope>NUCLEOTIDE SEQUENCE [LARGE SCALE GENOMIC DNA]</scope>
    <source>
        <strain>168</strain>
    </source>
</reference>
<reference key="3">
    <citation type="journal article" date="2010" name="J. Bacteriol.">
        <title>Evidence for widespread gene control function by the ydaO riboswitch candidate.</title>
        <authorList>
            <person name="Block K.F."/>
            <person name="Hammond M.C."/>
            <person name="Breaker R.R."/>
        </authorList>
    </citation>
    <scope>INDUCTION</scope>
</reference>
<reference key="4">
    <citation type="journal article" date="2013" name="Nat. Chem. Biol.">
        <title>Riboswitches in eubacteria sense the second messenger c-di-AMP.</title>
        <authorList>
            <person name="Nelson J.W."/>
            <person name="Sudarsan N."/>
            <person name="Furukawa K."/>
            <person name="Weinberg Z."/>
            <person name="Wang J.X."/>
            <person name="Breaker R.R."/>
        </authorList>
    </citation>
    <scope>INDUCTION</scope>
</reference>
<reference key="5">
    <citation type="journal article" date="2017" name="Sci. Signal.">
        <title>Control of potassium homeostasis is an essential function of the second messenger cyclic di-AMP in Bacillus subtilis.</title>
        <authorList>
            <person name="Gundlach J."/>
            <person name="Herzberg C."/>
            <person name="Kaever V."/>
            <person name="Gunka K."/>
            <person name="Hoffmann T."/>
            <person name="Weiss M."/>
            <person name="Gibhardt J."/>
            <person name="Thuermer A."/>
            <person name="Hertel D."/>
            <person name="Daniel R."/>
            <person name="Bremer E."/>
            <person name="Commichau F.M."/>
            <person name="Stuelke J."/>
        </authorList>
    </citation>
    <scope>FUNCTION AS A TRANSPORTER</scope>
    <scope>INDUCTION</scope>
</reference>
<reference key="6">
    <citation type="journal article" date="2019" name="J. Biol. Chem.">
        <title>Sustained sensing in potassium homeostasis: Cyclic di-AMP controls potassium uptake by KimA at the levels of expression and activity.</title>
        <authorList>
            <person name="Gundlach J."/>
            <person name="Krueger L."/>
            <person name="Herzberg C."/>
            <person name="Turdiev A."/>
            <person name="Poehlein A."/>
            <person name="Tascon I."/>
            <person name="Weiss M."/>
            <person name="Hertel D."/>
            <person name="Daniel R."/>
            <person name="Haenelt I."/>
            <person name="Lee V.T."/>
            <person name="Stuelke J."/>
        </authorList>
    </citation>
    <scope>ACTIVITY REGULATION</scope>
    <source>
        <strain>168</strain>
    </source>
</reference>
<reference evidence="8" key="7">
    <citation type="journal article" date="2020" name="Nat. Commun.">
        <title>Structural basis of proton-coupled potassium transport in the KUP family.</title>
        <authorList>
            <person name="Tascon I."/>
            <person name="Sousa J.S."/>
            <person name="Corey R.A."/>
            <person name="Mills D.J."/>
            <person name="Griwatz D."/>
            <person name="Aumuller N."/>
            <person name="Mikusevic V."/>
            <person name="Stansfeld P.J."/>
            <person name="Vonck J."/>
            <person name="Hanelt I."/>
        </authorList>
    </citation>
    <scope>STRUCTURE BY ELECTRON MICROSCOPY (3.70 ANGSTROMS) IN COMPLEX WITH POTASSIUM</scope>
    <scope>FUNCTION</scope>
    <scope>CATALYTIC ACTIVITY</scope>
    <scope>ACTIVITY REGULATION</scope>
    <scope>BIOPHYSICOCHEMICAL PROPERTIES</scope>
    <scope>SUBUNIT</scope>
    <scope>SUBCELLULAR LOCATION</scope>
    <scope>TOPOLOGY</scope>
    <scope>MUTAGENESIS OF ASP-36; TYR-43; ASP-117; THR-121; SER-125; GLU-233 AND TYR-377</scope>
</reference>
<sequence>MYHSIKRFLIGKPLKSQAAGEQKLTKLKALAMLSSDALSSVAYGTEQILIILATISAAAFWYSIPIAVGVLILLLALILSYRQIIYAYPQGGGAYIVSKENLGEKPGLIAGGSLLVDYILTVAVSISAGTDAITSAFPALHDYHVPIAIFLVLVIMILNLRGLSESASILAYPVYLFVVALLVLIAVGLFKLMTGQIDQPAHHTSLGTPVAGITLFLLLKAFSSGCSALTGVEAISNAIPAFKNPPARNAARTLAMMGILLAILFSGITVLAYGYGTAPKPDETVVSQIASETFGRNVFYYVIQGVTSLILVLAANTGFSAFPQLAFNLARDQYMPRMFTVRGDRLGFSNGIIFLGFASIVLIILFGGQTEHLIPLYAVGVFIPFTLSQTGMCMKWIKQKPKGWIGKMLINSCGALISFMVLSILFVTKFNVVWPVLIFMPIVVLLFFAIKNHYTAVGEQLRIVDKEPEEIKGTVVIVPVAGVTTVVQKSIHYAKSLSDQVIAVHVSFDREQEKKFEKRWEELNNGVRLVTLHSSYRSLVHPFDKFLETVEAKAKKEQFSVMVLFPQFITKKRWHTILHNQSAFLLRVRLFWKKDIMVATLPYHFKK</sequence>
<organism>
    <name type="scientific">Bacillus subtilis (strain 168)</name>
    <dbReference type="NCBI Taxonomy" id="224308"/>
    <lineage>
        <taxon>Bacteria</taxon>
        <taxon>Bacillati</taxon>
        <taxon>Bacillota</taxon>
        <taxon>Bacilli</taxon>
        <taxon>Bacillales</taxon>
        <taxon>Bacillaceae</taxon>
        <taxon>Bacillus</taxon>
    </lineage>
</organism>
<keyword id="KW-0002">3D-structure</keyword>
<keyword id="KW-1003">Cell membrane</keyword>
<keyword id="KW-0406">Ion transport</keyword>
<keyword id="KW-0472">Membrane</keyword>
<keyword id="KW-0479">Metal-binding</keyword>
<keyword id="KW-0630">Potassium</keyword>
<keyword id="KW-0633">Potassium transport</keyword>
<keyword id="KW-1185">Reference proteome</keyword>
<keyword id="KW-0769">Symport</keyword>
<keyword id="KW-0812">Transmembrane</keyword>
<keyword id="KW-1133">Transmembrane helix</keyword>
<keyword id="KW-0813">Transport</keyword>
<gene>
    <name evidence="6" type="primary">kimA</name>
    <name type="synonym">ydaO</name>
    <name type="ordered locus">BSU04320</name>
</gene>
<feature type="chain" id="PRO_0000376842" description="Potassium transporter KimA">
    <location>
        <begin position="1"/>
        <end position="607"/>
    </location>
</feature>
<feature type="topological domain" description="Cytoplasmic" evidence="5">
    <location>
        <begin position="1"/>
        <end position="30"/>
    </location>
</feature>
<feature type="transmembrane region" description="Helical" evidence="5 8">
    <location>
        <begin position="31"/>
        <end position="49"/>
    </location>
</feature>
<feature type="topological domain" description="Extracellular" evidence="5">
    <location>
        <begin position="50"/>
        <end position="62"/>
    </location>
</feature>
<feature type="transmembrane region" description="Helical" evidence="5 8">
    <location>
        <begin position="63"/>
        <end position="84"/>
    </location>
</feature>
<feature type="topological domain" description="Cytoplasmic" evidence="5">
    <location>
        <begin position="85"/>
        <end position="105"/>
    </location>
</feature>
<feature type="transmembrane region" description="Helical" evidence="5 8">
    <location>
        <begin position="106"/>
        <end position="134"/>
    </location>
</feature>
<feature type="topological domain" description="Extracellular" evidence="5">
    <location>
        <begin position="135"/>
        <end position="142"/>
    </location>
</feature>
<feature type="transmembrane region" description="Helical" evidence="5 8">
    <location>
        <begin position="143"/>
        <end position="162"/>
    </location>
</feature>
<feature type="topological domain" description="Cytoplasmic" evidence="5">
    <location>
        <begin position="163"/>
        <end position="166"/>
    </location>
</feature>
<feature type="transmembrane region" description="Helical" evidence="5 8">
    <location>
        <begin position="167"/>
        <end position="190"/>
    </location>
</feature>
<feature type="topological domain" description="Extracellular" evidence="5">
    <location>
        <begin position="191"/>
        <end position="214"/>
    </location>
</feature>
<feature type="transmembrane region" description="Helical" evidence="5 8">
    <location>
        <begin position="215"/>
        <end position="238"/>
    </location>
</feature>
<feature type="topological domain" description="Cytoplasmic" evidence="5">
    <location>
        <begin position="239"/>
        <end position="249"/>
    </location>
</feature>
<feature type="transmembrane region" description="Helical" evidence="5 8">
    <location>
        <begin position="250"/>
        <end position="271"/>
    </location>
</feature>
<feature type="topological domain" description="Extracellular" evidence="5">
    <location>
        <begin position="272"/>
        <end position="298"/>
    </location>
</feature>
<feature type="transmembrane region" description="Helical" evidence="5 8">
    <location>
        <begin position="299"/>
        <end position="323"/>
    </location>
</feature>
<feature type="topological domain" description="Cytoplasmic" evidence="5">
    <location>
        <begin position="324"/>
        <end position="347"/>
    </location>
</feature>
<feature type="transmembrane region" description="Helical" evidence="5 8">
    <location>
        <begin position="348"/>
        <end position="366"/>
    </location>
</feature>
<feature type="topological domain" description="Extracellular" evidence="5">
    <location>
        <begin position="367"/>
        <end position="372"/>
    </location>
</feature>
<feature type="transmembrane region" description="Helical" evidence="5 8">
    <location>
        <begin position="373"/>
        <end position="393"/>
    </location>
</feature>
<feature type="topological domain" description="Cytoplasmic" evidence="5">
    <location>
        <begin position="394"/>
        <end position="405"/>
    </location>
</feature>
<feature type="transmembrane region" description="Helical" evidence="5 8">
    <location>
        <begin position="406"/>
        <end position="428"/>
    </location>
</feature>
<feature type="topological domain" description="Extracellular" evidence="5">
    <location>
        <begin position="429"/>
        <end position="431"/>
    </location>
</feature>
<feature type="transmembrane region" description="Helical" evidence="5 8">
    <location>
        <begin position="432"/>
        <end position="447"/>
    </location>
</feature>
<feature type="topological domain" description="Cytoplasmic" evidence="5">
    <location>
        <begin position="448"/>
        <end position="607"/>
    </location>
</feature>
<feature type="binding site" evidence="5 8">
    <location>
        <position position="36"/>
    </location>
    <ligand>
        <name>K(+)</name>
        <dbReference type="ChEBI" id="CHEBI:29103"/>
        <label>1</label>
    </ligand>
</feature>
<feature type="binding site" evidence="5 8">
    <location>
        <position position="36"/>
    </location>
    <ligand>
        <name>K(+)</name>
        <dbReference type="ChEBI" id="CHEBI:29103"/>
        <label>2</label>
    </ligand>
</feature>
<feature type="binding site" evidence="5 8">
    <location>
        <position position="43"/>
    </location>
    <ligand>
        <name>K(+)</name>
        <dbReference type="ChEBI" id="CHEBI:29103"/>
        <label>2</label>
    </ligand>
</feature>
<feature type="binding site" evidence="5 8">
    <location>
        <position position="117"/>
    </location>
    <ligand>
        <name>K(+)</name>
        <dbReference type="ChEBI" id="CHEBI:29103"/>
        <label>3</label>
    </ligand>
</feature>
<feature type="binding site" evidence="5 8">
    <location>
        <position position="125"/>
    </location>
    <ligand>
        <name>K(+)</name>
        <dbReference type="ChEBI" id="CHEBI:29103"/>
        <label>2</label>
    </ligand>
</feature>
<feature type="mutagenesis site" description="Abolishes potassium uptake." evidence="5">
    <original>D</original>
    <variation>A</variation>
    <variation>N</variation>
    <location>
        <position position="36"/>
    </location>
</feature>
<feature type="mutagenesis site" description="Abolishes potassium uptake." evidence="5">
    <original>Y</original>
    <variation>N</variation>
    <location>
        <position position="43"/>
    </location>
</feature>
<feature type="mutagenesis site" description="No effect on growth." evidence="5">
    <original>D</original>
    <variation>A</variation>
    <variation>N</variation>
    <variation>E</variation>
    <location>
        <position position="117"/>
    </location>
</feature>
<feature type="mutagenesis site" description="Decreases potassium uptake." evidence="5">
    <original>T</original>
    <variation>A</variation>
    <location>
        <position position="121"/>
    </location>
</feature>
<feature type="mutagenesis site" description="Decreases potassium uptake." evidence="5">
    <original>S</original>
    <variation>A</variation>
    <location>
        <position position="125"/>
    </location>
</feature>
<feature type="mutagenesis site" description="Abolishes potassium uptake." evidence="5">
    <original>E</original>
    <variation>A</variation>
    <variation>Q</variation>
    <location>
        <position position="233"/>
    </location>
</feature>
<feature type="mutagenesis site" description="Decreases potassium uptake." evidence="5">
    <original>Y</original>
    <variation>A</variation>
    <location>
        <position position="377"/>
    </location>
</feature>
<feature type="helix" evidence="9">
    <location>
        <begin position="26"/>
        <end position="33"/>
    </location>
</feature>
<feature type="turn" evidence="9">
    <location>
        <begin position="34"/>
        <end position="39"/>
    </location>
</feature>
<feature type="helix" evidence="9">
    <location>
        <begin position="40"/>
        <end position="42"/>
    </location>
</feature>
<feature type="helix" evidence="9">
    <location>
        <begin position="44"/>
        <end position="53"/>
    </location>
</feature>
<feature type="helix" evidence="9">
    <location>
        <begin position="57"/>
        <end position="62"/>
    </location>
</feature>
<feature type="helix" evidence="9">
    <location>
        <begin position="63"/>
        <end position="87"/>
    </location>
</feature>
<feature type="helix" evidence="9">
    <location>
        <begin position="94"/>
        <end position="102"/>
    </location>
</feature>
<feature type="helix" evidence="9">
    <location>
        <begin position="105"/>
        <end position="136"/>
    </location>
</feature>
<feature type="helix" evidence="9">
    <location>
        <begin position="138"/>
        <end position="143"/>
    </location>
</feature>
<feature type="helix" evidence="9">
    <location>
        <begin position="144"/>
        <end position="160"/>
    </location>
</feature>
<feature type="turn" evidence="9">
    <location>
        <begin position="169"/>
        <end position="171"/>
    </location>
</feature>
<feature type="helix" evidence="9">
    <location>
        <begin position="172"/>
        <end position="194"/>
    </location>
</feature>
<feature type="helix" evidence="9">
    <location>
        <begin position="215"/>
        <end position="225"/>
    </location>
</feature>
<feature type="helix" evidence="9">
    <location>
        <begin position="226"/>
        <end position="228"/>
    </location>
</feature>
<feature type="helix" evidence="9">
    <location>
        <begin position="233"/>
        <end position="236"/>
    </location>
</feature>
<feature type="strand" evidence="9">
    <location>
        <begin position="240"/>
        <end position="245"/>
    </location>
</feature>
<feature type="helix" evidence="9">
    <location>
        <begin position="246"/>
        <end position="275"/>
    </location>
</feature>
<feature type="helix" evidence="9">
    <location>
        <begin position="285"/>
        <end position="294"/>
    </location>
</feature>
<feature type="helix" evidence="9">
    <location>
        <begin position="298"/>
        <end position="330"/>
    </location>
</feature>
<feature type="turn" evidence="9">
    <location>
        <begin position="331"/>
        <end position="333"/>
    </location>
</feature>
<feature type="helix" evidence="9">
    <location>
        <begin position="337"/>
        <end position="339"/>
    </location>
</feature>
<feature type="turn" evidence="9">
    <location>
        <begin position="342"/>
        <end position="347"/>
    </location>
</feature>
<feature type="helix" evidence="9">
    <location>
        <begin position="348"/>
        <end position="366"/>
    </location>
</feature>
<feature type="helix" evidence="9">
    <location>
        <begin position="370"/>
        <end position="399"/>
    </location>
</feature>
<feature type="helix" evidence="9">
    <location>
        <begin position="404"/>
        <end position="428"/>
    </location>
</feature>
<feature type="helix" evidence="9">
    <location>
        <begin position="430"/>
        <end position="462"/>
    </location>
</feature>
<feature type="strand" evidence="9">
    <location>
        <begin position="474"/>
        <end position="479"/>
    </location>
</feature>
<feature type="strand" evidence="9">
    <location>
        <begin position="481"/>
        <end position="483"/>
    </location>
</feature>
<feature type="helix" evidence="9">
    <location>
        <begin position="485"/>
        <end position="497"/>
    </location>
</feature>
<feature type="strand" evidence="9">
    <location>
        <begin position="502"/>
        <end position="508"/>
    </location>
</feature>
<feature type="helix" evidence="9">
    <location>
        <begin position="510"/>
        <end position="522"/>
    </location>
</feature>
<feature type="strand" evidence="9">
    <location>
        <begin position="528"/>
        <end position="533"/>
    </location>
</feature>
<feature type="helix" evidence="9">
    <location>
        <begin position="540"/>
        <end position="556"/>
    </location>
</feature>
<feature type="strand" evidence="9">
    <location>
        <begin position="560"/>
        <end position="569"/>
    </location>
</feature>
<feature type="helix" evidence="9">
    <location>
        <begin position="575"/>
        <end position="578"/>
    </location>
</feature>
<feature type="helix" evidence="9">
    <location>
        <begin position="581"/>
        <end position="589"/>
    </location>
</feature>
<feature type="turn" evidence="9">
    <location>
        <begin position="590"/>
        <end position="595"/>
    </location>
</feature>
<feature type="strand" evidence="9">
    <location>
        <begin position="597"/>
        <end position="604"/>
    </location>
</feature>
<name>KIMA_BACSU</name>
<protein>
    <recommendedName>
        <fullName evidence="7">Potassium transporter KimA</fullName>
    </recommendedName>
    <alternativeName>
        <fullName evidence="6">K(+) importer A</fullName>
    </alternativeName>
    <alternativeName>
        <fullName evidence="7">Potassium-proton symporter KimA</fullName>
    </alternativeName>
</protein>
<proteinExistence type="evidence at protein level"/>
<accession>P96589</accession>
<accession>Q797M3</accession>
<dbReference type="EMBL" id="AB001488">
    <property type="protein sequence ID" value="BAA19269.1"/>
    <property type="molecule type" value="Genomic_DNA"/>
</dbReference>
<dbReference type="EMBL" id="AL009126">
    <property type="protein sequence ID" value="CAB12239.1"/>
    <property type="molecule type" value="Genomic_DNA"/>
</dbReference>
<dbReference type="PIR" id="F69769">
    <property type="entry name" value="F69769"/>
</dbReference>
<dbReference type="RefSeq" id="NP_388313.1">
    <property type="nucleotide sequence ID" value="NC_000964.3"/>
</dbReference>
<dbReference type="RefSeq" id="WP_003246693.1">
    <property type="nucleotide sequence ID" value="NZ_OZ025638.1"/>
</dbReference>
<dbReference type="PDB" id="6S3K">
    <property type="method" value="EM"/>
    <property type="resolution" value="3.70 A"/>
    <property type="chains" value="A/B=1-607"/>
</dbReference>
<dbReference type="PDB" id="8B70">
    <property type="method" value="EM"/>
    <property type="resolution" value="3.30 A"/>
    <property type="chains" value="A/B=1-607"/>
</dbReference>
<dbReference type="PDB" id="8B71">
    <property type="method" value="EM"/>
    <property type="resolution" value="3.80 A"/>
    <property type="chains" value="A/B=1-607"/>
</dbReference>
<dbReference type="PDBsum" id="6S3K"/>
<dbReference type="PDBsum" id="8B70"/>
<dbReference type="PDBsum" id="8B71"/>
<dbReference type="EMDB" id="EMD-15894"/>
<dbReference type="EMDB" id="EMD-15895"/>
<dbReference type="SMR" id="P96589"/>
<dbReference type="FunCoup" id="P96589">
    <property type="interactions" value="14"/>
</dbReference>
<dbReference type="STRING" id="224308.BSU04320"/>
<dbReference type="PaxDb" id="224308-BSU04320"/>
<dbReference type="EnsemblBacteria" id="CAB12239">
    <property type="protein sequence ID" value="CAB12239"/>
    <property type="gene ID" value="BSU_04320"/>
</dbReference>
<dbReference type="GeneID" id="938237"/>
<dbReference type="KEGG" id="bsu:BSU04320"/>
<dbReference type="PATRIC" id="fig|224308.179.peg.458"/>
<dbReference type="eggNOG" id="COG0531">
    <property type="taxonomic scope" value="Bacteria"/>
</dbReference>
<dbReference type="InParanoid" id="P96589"/>
<dbReference type="OrthoDB" id="9759676at2"/>
<dbReference type="PhylomeDB" id="P96589"/>
<dbReference type="BioCyc" id="BSUB:BSU04320-MONOMER"/>
<dbReference type="Proteomes" id="UP000001570">
    <property type="component" value="Chromosome"/>
</dbReference>
<dbReference type="GO" id="GO:0005886">
    <property type="term" value="C:plasma membrane"/>
    <property type="evidence" value="ECO:0007669"/>
    <property type="project" value="UniProtKB-SubCell"/>
</dbReference>
<dbReference type="GO" id="GO:0046872">
    <property type="term" value="F:metal ion binding"/>
    <property type="evidence" value="ECO:0007669"/>
    <property type="project" value="UniProtKB-KW"/>
</dbReference>
<dbReference type="GO" id="GO:0015293">
    <property type="term" value="F:symporter activity"/>
    <property type="evidence" value="ECO:0007669"/>
    <property type="project" value="UniProtKB-KW"/>
</dbReference>
<dbReference type="GO" id="GO:0006813">
    <property type="term" value="P:potassium ion transport"/>
    <property type="evidence" value="ECO:0007669"/>
    <property type="project" value="UniProtKB-KW"/>
</dbReference>
<dbReference type="Gene3D" id="1.20.1740.10">
    <property type="entry name" value="Amino acid/polyamine transporter I"/>
    <property type="match status" value="1"/>
</dbReference>
<dbReference type="InterPro" id="IPR002293">
    <property type="entry name" value="AA/rel_permease1"/>
</dbReference>
<dbReference type="InterPro" id="IPR053153">
    <property type="entry name" value="APC_K+_Transporter"/>
</dbReference>
<dbReference type="PANTHER" id="PTHR47704">
    <property type="entry name" value="POTASSIUM TRANSPORTER KIMA"/>
    <property type="match status" value="1"/>
</dbReference>
<dbReference type="PANTHER" id="PTHR47704:SF1">
    <property type="entry name" value="POTASSIUM TRANSPORTER KIMA"/>
    <property type="match status" value="1"/>
</dbReference>
<dbReference type="Pfam" id="PF13520">
    <property type="entry name" value="AA_permease_2"/>
    <property type="match status" value="1"/>
</dbReference>
<comment type="function">
    <text evidence="3 5">High-affinity potassium transporter (PubMed:28420751, PubMed:32005818). Functions as a K(+)/H(+) symporter (PubMed:32005818).</text>
</comment>
<comment type="catalytic activity">
    <reaction evidence="5">
        <text>K(+)(in) + H(+)(in) = K(+)(out) + H(+)(out)</text>
        <dbReference type="Rhea" id="RHEA:28490"/>
        <dbReference type="ChEBI" id="CHEBI:15378"/>
        <dbReference type="ChEBI" id="CHEBI:29103"/>
    </reaction>
    <physiologicalReaction direction="right-to-left" evidence="5">
        <dbReference type="Rhea" id="RHEA:28492"/>
    </physiologicalReaction>
</comment>
<comment type="activity regulation">
    <text evidence="4 5">Potassium uptake increases at lower external pH and is abolished by the proton ionophore carbonyl cyanide m-chlorophenylhydrazone (CCCP) (PubMed:32005818). Binds cyclic di-AMP (c-di-AMP), which inhibits the potassium transport activity (PubMed:31061098).</text>
</comment>
<comment type="biophysicochemical properties">
    <kinetics>
        <KM evidence="5">215 uM for potassium</KM>
        <Vmax evidence="5">245.0 nmol/min/mg enzyme</Vmax>
    </kinetics>
</comment>
<comment type="subunit">
    <text evidence="5">Homodimer.</text>
</comment>
<comment type="subcellular location">
    <subcellularLocation>
        <location evidence="5">Cell membrane</location>
        <topology evidence="5">Multi-pass membrane protein</topology>
    </subcellularLocation>
</comment>
<comment type="induction">
    <text evidence="1 2 3">Induced by low K(+) concentrations (PubMed:28420751). Expression is regulated by cyclic di-AMP (c-di-AMP), via the ydaO riboswitch (PubMed:20511502, PubMed:24141192, PubMed:28420751). High external concentrations of K(+) stimulate an increase in the production of c-di-AMP, which binds to the riboswitch and prevents kimA expression (PubMed:28420751).</text>
</comment>
<comment type="similarity">
    <text evidence="7">Belongs to the amino acid-polyamine-organocation (APC) superfamily.</text>
</comment>